<accession>Q8TZD9</accession>
<evidence type="ECO:0000255" key="1">
    <source>
        <dbReference type="HAMAP-Rule" id="MF_01343"/>
    </source>
</evidence>
<evidence type="ECO:0000256" key="2">
    <source>
        <dbReference type="SAM" id="MobiDB-lite"/>
    </source>
</evidence>
<evidence type="ECO:0000269" key="3">
    <source>
    </source>
</evidence>
<evidence type="ECO:0007744" key="4">
    <source>
        <dbReference type="PDB" id="4V6U"/>
    </source>
</evidence>
<name>RS15_PYRFU</name>
<comment type="subunit">
    <text evidence="1 3">Part of the 30S ribosomal subunit.</text>
</comment>
<comment type="similarity">
    <text evidence="1">Belongs to the universal ribosomal protein uS15 family.</text>
</comment>
<keyword id="KW-0002">3D-structure</keyword>
<keyword id="KW-1185">Reference proteome</keyword>
<keyword id="KW-0687">Ribonucleoprotein</keyword>
<keyword id="KW-0689">Ribosomal protein</keyword>
<reference key="1">
    <citation type="journal article" date="1999" name="Genetics">
        <title>Divergence of the hyperthermophilic archaea Pyrococcus furiosus and P. horikoshii inferred from complete genomic sequences.</title>
        <authorList>
            <person name="Maeder D.L."/>
            <person name="Weiss R.B."/>
            <person name="Dunn D.M."/>
            <person name="Cherry J.L."/>
            <person name="Gonzalez J.M."/>
            <person name="DiRuggiero J."/>
            <person name="Robb F.T."/>
        </authorList>
    </citation>
    <scope>NUCLEOTIDE SEQUENCE [LARGE SCALE GENOMIC DNA]</scope>
    <source>
        <strain>ATCC 43587 / DSM 3638 / JCM 8422 / Vc1</strain>
    </source>
</reference>
<reference evidence="4" key="2">
    <citation type="journal article" date="2013" name="Nucleic Acids Res.">
        <title>Promiscuous behaviour of archaeal ribosomal proteins: implications for eukaryotic ribosome evolution.</title>
        <authorList>
            <person name="Armache J.P."/>
            <person name="Anger A.M."/>
            <person name="Marquez V."/>
            <person name="Franckenberg S."/>
            <person name="Frohlich T."/>
            <person name="Villa E."/>
            <person name="Berninghausen O."/>
            <person name="Thomm M."/>
            <person name="Arnold G.J."/>
            <person name="Beckmann R."/>
            <person name="Wilson D.N."/>
        </authorList>
    </citation>
    <scope>STRUCTURE BY ELECTRON MICROSCOPY (6.60 ANGSTROMS) IN THE 70S RIBOSOME</scope>
    <scope>SUBUNIT</scope>
</reference>
<gene>
    <name evidence="1" type="primary">rps15</name>
    <name type="ordered locus">PF2056</name>
</gene>
<feature type="chain" id="PRO_0000115617" description="Small ribosomal subunit protein uS15">
    <location>
        <begin position="1"/>
        <end position="158"/>
    </location>
</feature>
<feature type="region of interest" description="Disordered" evidence="2">
    <location>
        <begin position="1"/>
        <end position="21"/>
    </location>
</feature>
<feature type="compositionally biased region" description="Basic residues" evidence="2">
    <location>
        <begin position="1"/>
        <end position="18"/>
    </location>
</feature>
<organism>
    <name type="scientific">Pyrococcus furiosus (strain ATCC 43587 / DSM 3638 / JCM 8422 / Vc1)</name>
    <dbReference type="NCBI Taxonomy" id="186497"/>
    <lineage>
        <taxon>Archaea</taxon>
        <taxon>Methanobacteriati</taxon>
        <taxon>Methanobacteriota</taxon>
        <taxon>Thermococci</taxon>
        <taxon>Thermococcales</taxon>
        <taxon>Thermococcaceae</taxon>
        <taxon>Pyrococcus</taxon>
    </lineage>
</organism>
<protein>
    <recommendedName>
        <fullName evidence="1">Small ribosomal subunit protein uS15</fullName>
    </recommendedName>
    <alternativeName>
        <fullName>30S ribosomal protein S15</fullName>
    </alternativeName>
</protein>
<sequence length="158" mass="18600">MARMHARKRGKSGSKRPPRTAPPIWVEYTVEEIENLVVKLRKEGYSTAMIGTILRDQYGIPSVKLFKDPDNPNRNLTITRILEKHGLAPEIPEDLMFLIRRAVNLRKHLEQHPKDLHSMRGLQLIESKIRRLVKYYKRKGKLPKNWRYDPETAKLLVR</sequence>
<proteinExistence type="evidence at protein level"/>
<dbReference type="EMBL" id="AE009950">
    <property type="protein sequence ID" value="AAL82180.1"/>
    <property type="molecule type" value="Genomic_DNA"/>
</dbReference>
<dbReference type="RefSeq" id="WP_011013203.1">
    <property type="nucleotide sequence ID" value="NZ_CP023154.1"/>
</dbReference>
<dbReference type="PDB" id="4V4N">
    <property type="method" value="EM"/>
    <property type="resolution" value="9.00 A"/>
    <property type="chains" value="Q=1-158"/>
</dbReference>
<dbReference type="PDB" id="4V6U">
    <property type="method" value="EM"/>
    <property type="resolution" value="6.60 A"/>
    <property type="chains" value="AQ=1-158"/>
</dbReference>
<dbReference type="PDB" id="5JB3">
    <property type="method" value="EM"/>
    <property type="resolution" value="5.34 A"/>
    <property type="chains" value="Q=1-158"/>
</dbReference>
<dbReference type="PDB" id="5JBH">
    <property type="method" value="EM"/>
    <property type="resolution" value="5.34 A"/>
    <property type="chains" value="Q=1-158"/>
</dbReference>
<dbReference type="PDBsum" id="4V4N"/>
<dbReference type="PDBsum" id="4V6U"/>
<dbReference type="PDBsum" id="5JB3"/>
<dbReference type="PDBsum" id="5JBH"/>
<dbReference type="EMDB" id="EMD-50611"/>
<dbReference type="EMDB" id="EMD-50612"/>
<dbReference type="EMDB" id="EMD-50613"/>
<dbReference type="EMDB" id="EMD-8149"/>
<dbReference type="SMR" id="Q8TZD9"/>
<dbReference type="STRING" id="186497.PF2056"/>
<dbReference type="PaxDb" id="186497-PF2056"/>
<dbReference type="DNASU" id="1469944"/>
<dbReference type="KEGG" id="pfu:PF2056"/>
<dbReference type="PATRIC" id="fig|186497.12.peg.2136"/>
<dbReference type="eggNOG" id="arCOG04185">
    <property type="taxonomic scope" value="Archaea"/>
</dbReference>
<dbReference type="HOGENOM" id="CLU_090139_2_0_2"/>
<dbReference type="OrthoDB" id="6533at2157"/>
<dbReference type="PhylomeDB" id="Q8TZD9"/>
<dbReference type="Proteomes" id="UP000001013">
    <property type="component" value="Chromosome"/>
</dbReference>
<dbReference type="GO" id="GO:0022627">
    <property type="term" value="C:cytosolic small ribosomal subunit"/>
    <property type="evidence" value="ECO:0007669"/>
    <property type="project" value="TreeGrafter"/>
</dbReference>
<dbReference type="GO" id="GO:0070181">
    <property type="term" value="F:small ribosomal subunit rRNA binding"/>
    <property type="evidence" value="ECO:0007669"/>
    <property type="project" value="TreeGrafter"/>
</dbReference>
<dbReference type="GO" id="GO:0003735">
    <property type="term" value="F:structural constituent of ribosome"/>
    <property type="evidence" value="ECO:0007669"/>
    <property type="project" value="InterPro"/>
</dbReference>
<dbReference type="GO" id="GO:0006412">
    <property type="term" value="P:translation"/>
    <property type="evidence" value="ECO:0007669"/>
    <property type="project" value="UniProtKB-UniRule"/>
</dbReference>
<dbReference type="CDD" id="cd00353">
    <property type="entry name" value="Ribosomal_S15p_S13e"/>
    <property type="match status" value="1"/>
</dbReference>
<dbReference type="FunFam" id="1.10.287.10:FF:000003">
    <property type="entry name" value="40S ribosomal protein S13"/>
    <property type="match status" value="1"/>
</dbReference>
<dbReference type="Gene3D" id="4.10.860.130">
    <property type="match status" value="1"/>
</dbReference>
<dbReference type="Gene3D" id="1.10.287.10">
    <property type="entry name" value="S15/NS1, RNA-binding"/>
    <property type="match status" value="1"/>
</dbReference>
<dbReference type="HAMAP" id="MF_01343_A">
    <property type="entry name" value="Ribosomal_uS15_A"/>
    <property type="match status" value="1"/>
</dbReference>
<dbReference type="InterPro" id="IPR000589">
    <property type="entry name" value="Ribosomal_uS15"/>
</dbReference>
<dbReference type="InterPro" id="IPR023029">
    <property type="entry name" value="Ribosomal_uS15_arc_euk"/>
</dbReference>
<dbReference type="InterPro" id="IPR012606">
    <property type="entry name" value="Ribosomal_uS15_N"/>
</dbReference>
<dbReference type="InterPro" id="IPR009068">
    <property type="entry name" value="uS15_NS1_RNA-bd_sf"/>
</dbReference>
<dbReference type="NCBIfam" id="NF006331">
    <property type="entry name" value="PRK08561.1"/>
    <property type="match status" value="1"/>
</dbReference>
<dbReference type="PANTHER" id="PTHR11885">
    <property type="entry name" value="RIBOSOMAL PROTEIN S15P/S13E"/>
    <property type="match status" value="1"/>
</dbReference>
<dbReference type="PANTHER" id="PTHR11885:SF6">
    <property type="entry name" value="SMALL RIBOSOMAL SUBUNIT PROTEIN US15"/>
    <property type="match status" value="1"/>
</dbReference>
<dbReference type="Pfam" id="PF08069">
    <property type="entry name" value="Ribosomal_S13_N"/>
    <property type="match status" value="1"/>
</dbReference>
<dbReference type="Pfam" id="PF00312">
    <property type="entry name" value="Ribosomal_S15"/>
    <property type="match status" value="1"/>
</dbReference>
<dbReference type="SMART" id="SM01386">
    <property type="entry name" value="Ribosomal_S13_N"/>
    <property type="match status" value="1"/>
</dbReference>
<dbReference type="SMART" id="SM01387">
    <property type="entry name" value="Ribosomal_S15"/>
    <property type="match status" value="1"/>
</dbReference>
<dbReference type="SUPFAM" id="SSF47060">
    <property type="entry name" value="S15/NS1 RNA-binding domain"/>
    <property type="match status" value="1"/>
</dbReference>
<dbReference type="PROSITE" id="PS00362">
    <property type="entry name" value="RIBOSOMAL_S15"/>
    <property type="match status" value="1"/>
</dbReference>